<feature type="chain" id="PRO_0000313982" description="tRNA U34 carboxymethyltransferase">
    <location>
        <begin position="1"/>
        <end position="332"/>
    </location>
</feature>
<feature type="binding site" evidence="1">
    <location>
        <position position="96"/>
    </location>
    <ligand>
        <name>carboxy-S-adenosyl-L-methionine</name>
        <dbReference type="ChEBI" id="CHEBI:134278"/>
    </ligand>
</feature>
<feature type="binding site" evidence="1">
    <location>
        <position position="110"/>
    </location>
    <ligand>
        <name>carboxy-S-adenosyl-L-methionine</name>
        <dbReference type="ChEBI" id="CHEBI:134278"/>
    </ligand>
</feature>
<feature type="binding site" evidence="1">
    <location>
        <position position="115"/>
    </location>
    <ligand>
        <name>carboxy-S-adenosyl-L-methionine</name>
        <dbReference type="ChEBI" id="CHEBI:134278"/>
    </ligand>
</feature>
<feature type="binding site" evidence="1">
    <location>
        <position position="135"/>
    </location>
    <ligand>
        <name>carboxy-S-adenosyl-L-methionine</name>
        <dbReference type="ChEBI" id="CHEBI:134278"/>
    </ligand>
</feature>
<feature type="binding site" evidence="1">
    <location>
        <begin position="186"/>
        <end position="187"/>
    </location>
    <ligand>
        <name>carboxy-S-adenosyl-L-methionine</name>
        <dbReference type="ChEBI" id="CHEBI:134278"/>
    </ligand>
</feature>
<feature type="binding site" evidence="1">
    <location>
        <position position="204"/>
    </location>
    <ligand>
        <name>carboxy-S-adenosyl-L-methionine</name>
        <dbReference type="ChEBI" id="CHEBI:134278"/>
    </ligand>
</feature>
<feature type="binding site" evidence="1">
    <location>
        <position position="208"/>
    </location>
    <ligand>
        <name>carboxy-S-adenosyl-L-methionine</name>
        <dbReference type="ChEBI" id="CHEBI:134278"/>
    </ligand>
</feature>
<feature type="binding site" evidence="1">
    <location>
        <position position="323"/>
    </location>
    <ligand>
        <name>carboxy-S-adenosyl-L-methionine</name>
        <dbReference type="ChEBI" id="CHEBI:134278"/>
    </ligand>
</feature>
<protein>
    <recommendedName>
        <fullName evidence="1">tRNA U34 carboxymethyltransferase</fullName>
        <ecNumber evidence="1">2.5.1.-</ecNumber>
    </recommendedName>
</protein>
<name>CMOB_HYDCU</name>
<evidence type="ECO:0000255" key="1">
    <source>
        <dbReference type="HAMAP-Rule" id="MF_01590"/>
    </source>
</evidence>
<sequence>MKHYHQHYSSFWPKLEEARLGHWQNALEAALETALDPDANGNLPKWLPALETVMAFPSSDSAELSQSAIKAHSQPFSEDDKEKLTQALKAFMPWRKGPFEIEGIYIDTEWHSDWKWDRVSPHLSSLKGRKVLDIGCGSGYHLWRMLGDGAELALGVDPGLLFMTQFLAIKHFVGESLPAYFLPLTLEQLPKTQPSEVFDTVFSMGVLYHRRSPIDHIMDLKRYLKPGGELVLETLVIPDAQGQLLVPKERYAQMNNVWFIPSVQELGHWLEKCGFKNVRCVDLDQTSVKEQRTTEWMNWNSLADFLDPNDSNKTIEGYSAPLRAVMIADKPC</sequence>
<keyword id="KW-0808">Transferase</keyword>
<keyword id="KW-0819">tRNA processing</keyword>
<organism>
    <name type="scientific">Hydrogenovibrio crunogenus (strain DSM 25203 / XCL-2)</name>
    <name type="common">Thiomicrospira crunogena</name>
    <dbReference type="NCBI Taxonomy" id="317025"/>
    <lineage>
        <taxon>Bacteria</taxon>
        <taxon>Pseudomonadati</taxon>
        <taxon>Pseudomonadota</taxon>
        <taxon>Gammaproteobacteria</taxon>
        <taxon>Thiotrichales</taxon>
        <taxon>Piscirickettsiaceae</taxon>
        <taxon>Hydrogenovibrio</taxon>
    </lineage>
</organism>
<dbReference type="EC" id="2.5.1.-" evidence="1"/>
<dbReference type="EMBL" id="CP000109">
    <property type="protein sequence ID" value="ABB40675.1"/>
    <property type="molecule type" value="Genomic_DNA"/>
</dbReference>
<dbReference type="SMR" id="Q31JJ8"/>
<dbReference type="STRING" id="317025.Tcr_0078"/>
<dbReference type="KEGG" id="tcx:Tcr_0078"/>
<dbReference type="eggNOG" id="COG0500">
    <property type="taxonomic scope" value="Bacteria"/>
</dbReference>
<dbReference type="HOGENOM" id="CLU_052665_0_0_6"/>
<dbReference type="OrthoDB" id="9773188at2"/>
<dbReference type="GO" id="GO:0008168">
    <property type="term" value="F:methyltransferase activity"/>
    <property type="evidence" value="ECO:0007669"/>
    <property type="project" value="TreeGrafter"/>
</dbReference>
<dbReference type="GO" id="GO:0016765">
    <property type="term" value="F:transferase activity, transferring alkyl or aryl (other than methyl) groups"/>
    <property type="evidence" value="ECO:0007669"/>
    <property type="project" value="UniProtKB-UniRule"/>
</dbReference>
<dbReference type="GO" id="GO:0002098">
    <property type="term" value="P:tRNA wobble uridine modification"/>
    <property type="evidence" value="ECO:0007669"/>
    <property type="project" value="InterPro"/>
</dbReference>
<dbReference type="CDD" id="cd02440">
    <property type="entry name" value="AdoMet_MTases"/>
    <property type="match status" value="1"/>
</dbReference>
<dbReference type="Gene3D" id="3.40.50.150">
    <property type="entry name" value="Vaccinia Virus protein VP39"/>
    <property type="match status" value="1"/>
</dbReference>
<dbReference type="HAMAP" id="MF_01590">
    <property type="entry name" value="tRNA_carboxymethyltr_CmoB"/>
    <property type="match status" value="1"/>
</dbReference>
<dbReference type="InterPro" id="IPR010017">
    <property type="entry name" value="CmoB"/>
</dbReference>
<dbReference type="InterPro" id="IPR027555">
    <property type="entry name" value="Mo5U34_MeTrfas-like"/>
</dbReference>
<dbReference type="InterPro" id="IPR029063">
    <property type="entry name" value="SAM-dependent_MTases_sf"/>
</dbReference>
<dbReference type="NCBIfam" id="NF011650">
    <property type="entry name" value="PRK15068.1"/>
    <property type="match status" value="1"/>
</dbReference>
<dbReference type="NCBIfam" id="TIGR00452">
    <property type="entry name" value="tRNA 5-methoxyuridine(34)/uridine 5-oxyacetic acid(34) synthase CmoB"/>
    <property type="match status" value="1"/>
</dbReference>
<dbReference type="PANTHER" id="PTHR43464">
    <property type="entry name" value="METHYLTRANSFERASE"/>
    <property type="match status" value="1"/>
</dbReference>
<dbReference type="PANTHER" id="PTHR43464:SF95">
    <property type="entry name" value="TRNA U34 CARBOXYMETHYLTRANSFERASE"/>
    <property type="match status" value="1"/>
</dbReference>
<dbReference type="Pfam" id="PF08003">
    <property type="entry name" value="Methyltransf_9"/>
    <property type="match status" value="1"/>
</dbReference>
<dbReference type="SUPFAM" id="SSF53335">
    <property type="entry name" value="S-adenosyl-L-methionine-dependent methyltransferases"/>
    <property type="match status" value="1"/>
</dbReference>
<comment type="function">
    <text evidence="1">Catalyzes carboxymethyl transfer from carboxy-S-adenosyl-L-methionine (Cx-SAM) to 5-hydroxyuridine (ho5U) to form 5-carboxymethoxyuridine (cmo5U) at position 34 in tRNAs.</text>
</comment>
<comment type="catalytic activity">
    <reaction evidence="1">
        <text>carboxy-S-adenosyl-L-methionine + 5-hydroxyuridine(34) in tRNA = 5-carboxymethoxyuridine(34) in tRNA + S-adenosyl-L-homocysteine + H(+)</text>
        <dbReference type="Rhea" id="RHEA:52848"/>
        <dbReference type="Rhea" id="RHEA-COMP:13381"/>
        <dbReference type="Rhea" id="RHEA-COMP:13383"/>
        <dbReference type="ChEBI" id="CHEBI:15378"/>
        <dbReference type="ChEBI" id="CHEBI:57856"/>
        <dbReference type="ChEBI" id="CHEBI:134278"/>
        <dbReference type="ChEBI" id="CHEBI:136877"/>
        <dbReference type="ChEBI" id="CHEBI:136879"/>
    </reaction>
</comment>
<comment type="subunit">
    <text evidence="1">Homotetramer.</text>
</comment>
<comment type="similarity">
    <text evidence="1">Belongs to the class I-like SAM-binding methyltransferase superfamily. CmoB family.</text>
</comment>
<proteinExistence type="inferred from homology"/>
<accession>Q31JJ8</accession>
<gene>
    <name evidence="1" type="primary">cmoB</name>
    <name type="ordered locus">Tcr_0078</name>
</gene>
<reference key="1">
    <citation type="journal article" date="2006" name="PLoS Biol.">
        <title>The genome of deep-sea vent chemolithoautotroph Thiomicrospira crunogena XCL-2.</title>
        <authorList>
            <person name="Scott K.M."/>
            <person name="Sievert S.M."/>
            <person name="Abril F.N."/>
            <person name="Ball L.A."/>
            <person name="Barrett C.J."/>
            <person name="Blake R.A."/>
            <person name="Boller A.J."/>
            <person name="Chain P.S.G."/>
            <person name="Clark J.A."/>
            <person name="Davis C.R."/>
            <person name="Detter C."/>
            <person name="Do K.F."/>
            <person name="Dobrinski K.P."/>
            <person name="Faza B.I."/>
            <person name="Fitzpatrick K.A."/>
            <person name="Freyermuth S.K."/>
            <person name="Harmer T.L."/>
            <person name="Hauser L.J."/>
            <person name="Huegler M."/>
            <person name="Kerfeld C.A."/>
            <person name="Klotz M.G."/>
            <person name="Kong W.W."/>
            <person name="Land M."/>
            <person name="Lapidus A."/>
            <person name="Larimer F.W."/>
            <person name="Longo D.L."/>
            <person name="Lucas S."/>
            <person name="Malfatti S.A."/>
            <person name="Massey S.E."/>
            <person name="Martin D.D."/>
            <person name="McCuddin Z."/>
            <person name="Meyer F."/>
            <person name="Moore J.L."/>
            <person name="Ocampo L.H. Jr."/>
            <person name="Paul J.H."/>
            <person name="Paulsen I.T."/>
            <person name="Reep D.K."/>
            <person name="Ren Q."/>
            <person name="Ross R.L."/>
            <person name="Sato P.Y."/>
            <person name="Thomas P."/>
            <person name="Tinkham L.E."/>
            <person name="Zeruth G.T."/>
        </authorList>
    </citation>
    <scope>NUCLEOTIDE SEQUENCE [LARGE SCALE GENOMIC DNA]</scope>
    <source>
        <strain>DSM 25203 / XCL-2</strain>
    </source>
</reference>